<dbReference type="EC" id="2.7.7.-" evidence="1"/>
<dbReference type="EC" id="2.7.7.108" evidence="1"/>
<dbReference type="EMBL" id="CP000800">
    <property type="protein sequence ID" value="ABV18445.1"/>
    <property type="molecule type" value="Genomic_DNA"/>
</dbReference>
<dbReference type="RefSeq" id="WP_000175597.1">
    <property type="nucleotide sequence ID" value="NC_009801.1"/>
</dbReference>
<dbReference type="SMR" id="A7ZMH3"/>
<dbReference type="KEGG" id="ecw:EcE24377A_1924"/>
<dbReference type="HOGENOM" id="CLU_010245_4_1_6"/>
<dbReference type="Proteomes" id="UP000001122">
    <property type="component" value="Chromosome"/>
</dbReference>
<dbReference type="GO" id="GO:0070733">
    <property type="term" value="F:AMPylase activity"/>
    <property type="evidence" value="ECO:0007669"/>
    <property type="project" value="TreeGrafter"/>
</dbReference>
<dbReference type="GO" id="GO:0005524">
    <property type="term" value="F:ATP binding"/>
    <property type="evidence" value="ECO:0007669"/>
    <property type="project" value="UniProtKB-UniRule"/>
</dbReference>
<dbReference type="GO" id="GO:0000287">
    <property type="term" value="F:magnesium ion binding"/>
    <property type="evidence" value="ECO:0007669"/>
    <property type="project" value="UniProtKB-UniRule"/>
</dbReference>
<dbReference type="HAMAP" id="MF_00692">
    <property type="entry name" value="YdiU_SelO"/>
    <property type="match status" value="1"/>
</dbReference>
<dbReference type="InterPro" id="IPR054838">
    <property type="entry name" value="adnlytase_SelO"/>
</dbReference>
<dbReference type="InterPro" id="IPR003846">
    <property type="entry name" value="SelO"/>
</dbReference>
<dbReference type="NCBIfam" id="NF040880">
    <property type="entry name" value="adnlytase_SelO"/>
    <property type="match status" value="1"/>
</dbReference>
<dbReference type="NCBIfam" id="NF000658">
    <property type="entry name" value="PRK00029.1"/>
    <property type="match status" value="1"/>
</dbReference>
<dbReference type="PANTHER" id="PTHR32057">
    <property type="entry name" value="PROTEIN ADENYLYLTRANSFERASE SELO, MITOCHONDRIAL"/>
    <property type="match status" value="1"/>
</dbReference>
<dbReference type="PANTHER" id="PTHR32057:SF14">
    <property type="entry name" value="PROTEIN ADENYLYLTRANSFERASE SELO, MITOCHONDRIAL"/>
    <property type="match status" value="1"/>
</dbReference>
<dbReference type="Pfam" id="PF02696">
    <property type="entry name" value="SelO"/>
    <property type="match status" value="1"/>
</dbReference>
<reference key="1">
    <citation type="journal article" date="2008" name="J. Bacteriol.">
        <title>The pangenome structure of Escherichia coli: comparative genomic analysis of E. coli commensal and pathogenic isolates.</title>
        <authorList>
            <person name="Rasko D.A."/>
            <person name="Rosovitz M.J."/>
            <person name="Myers G.S.A."/>
            <person name="Mongodin E.F."/>
            <person name="Fricke W.F."/>
            <person name="Gajer P."/>
            <person name="Crabtree J."/>
            <person name="Sebaihia M."/>
            <person name="Thomson N.R."/>
            <person name="Chaudhuri R."/>
            <person name="Henderson I.R."/>
            <person name="Sperandio V."/>
            <person name="Ravel J."/>
        </authorList>
    </citation>
    <scope>NUCLEOTIDE SEQUENCE [LARGE SCALE GENOMIC DNA]</scope>
    <source>
        <strain>E24377A / ETEC</strain>
    </source>
</reference>
<protein>
    <recommendedName>
        <fullName evidence="1">Protein nucleotidyltransferase YdiU</fullName>
        <ecNumber evidence="1">2.7.7.-</ecNumber>
    </recommendedName>
    <alternativeName>
        <fullName evidence="1">Protein adenylyltransferase YdiU</fullName>
        <ecNumber evidence="1">2.7.7.108</ecNumber>
    </alternativeName>
    <alternativeName>
        <fullName evidence="1">Protein uridylyltransferase YdiU</fullName>
        <ecNumber evidence="1">2.7.7.-</ecNumber>
    </alternativeName>
</protein>
<comment type="function">
    <text evidence="1">Nucleotidyltransferase involved in the post-translational modification of proteins. It can catalyze the addition of adenosine monophosphate (AMP) or uridine monophosphate (UMP) to a protein, resulting in modifications known as AMPylation and UMPylation.</text>
</comment>
<comment type="catalytic activity">
    <reaction evidence="1">
        <text>L-seryl-[protein] + ATP = 3-O-(5'-adenylyl)-L-seryl-[protein] + diphosphate</text>
        <dbReference type="Rhea" id="RHEA:58120"/>
        <dbReference type="Rhea" id="RHEA-COMP:9863"/>
        <dbReference type="Rhea" id="RHEA-COMP:15073"/>
        <dbReference type="ChEBI" id="CHEBI:29999"/>
        <dbReference type="ChEBI" id="CHEBI:30616"/>
        <dbReference type="ChEBI" id="CHEBI:33019"/>
        <dbReference type="ChEBI" id="CHEBI:142516"/>
        <dbReference type="EC" id="2.7.7.108"/>
    </reaction>
</comment>
<comment type="catalytic activity">
    <reaction evidence="1">
        <text>L-threonyl-[protein] + ATP = 3-O-(5'-adenylyl)-L-threonyl-[protein] + diphosphate</text>
        <dbReference type="Rhea" id="RHEA:54292"/>
        <dbReference type="Rhea" id="RHEA-COMP:11060"/>
        <dbReference type="Rhea" id="RHEA-COMP:13847"/>
        <dbReference type="ChEBI" id="CHEBI:30013"/>
        <dbReference type="ChEBI" id="CHEBI:30616"/>
        <dbReference type="ChEBI" id="CHEBI:33019"/>
        <dbReference type="ChEBI" id="CHEBI:138113"/>
        <dbReference type="EC" id="2.7.7.108"/>
    </reaction>
</comment>
<comment type="catalytic activity">
    <reaction evidence="1">
        <text>L-tyrosyl-[protein] + ATP = O-(5'-adenylyl)-L-tyrosyl-[protein] + diphosphate</text>
        <dbReference type="Rhea" id="RHEA:54288"/>
        <dbReference type="Rhea" id="RHEA-COMP:10136"/>
        <dbReference type="Rhea" id="RHEA-COMP:13846"/>
        <dbReference type="ChEBI" id="CHEBI:30616"/>
        <dbReference type="ChEBI" id="CHEBI:33019"/>
        <dbReference type="ChEBI" id="CHEBI:46858"/>
        <dbReference type="ChEBI" id="CHEBI:83624"/>
        <dbReference type="EC" id="2.7.7.108"/>
    </reaction>
</comment>
<comment type="catalytic activity">
    <reaction evidence="1">
        <text>L-histidyl-[protein] + UTP = N(tele)-(5'-uridylyl)-L-histidyl-[protein] + diphosphate</text>
        <dbReference type="Rhea" id="RHEA:83891"/>
        <dbReference type="Rhea" id="RHEA-COMP:9745"/>
        <dbReference type="Rhea" id="RHEA-COMP:20239"/>
        <dbReference type="ChEBI" id="CHEBI:29979"/>
        <dbReference type="ChEBI" id="CHEBI:33019"/>
        <dbReference type="ChEBI" id="CHEBI:46398"/>
        <dbReference type="ChEBI" id="CHEBI:233474"/>
    </reaction>
</comment>
<comment type="catalytic activity">
    <reaction evidence="1">
        <text>L-seryl-[protein] + UTP = O-(5'-uridylyl)-L-seryl-[protein] + diphosphate</text>
        <dbReference type="Rhea" id="RHEA:64604"/>
        <dbReference type="Rhea" id="RHEA-COMP:9863"/>
        <dbReference type="Rhea" id="RHEA-COMP:16635"/>
        <dbReference type="ChEBI" id="CHEBI:29999"/>
        <dbReference type="ChEBI" id="CHEBI:33019"/>
        <dbReference type="ChEBI" id="CHEBI:46398"/>
        <dbReference type="ChEBI" id="CHEBI:156051"/>
    </reaction>
</comment>
<comment type="catalytic activity">
    <reaction evidence="1">
        <text>L-tyrosyl-[protein] + UTP = O-(5'-uridylyl)-L-tyrosyl-[protein] + diphosphate</text>
        <dbReference type="Rhea" id="RHEA:83887"/>
        <dbReference type="Rhea" id="RHEA-COMP:10136"/>
        <dbReference type="Rhea" id="RHEA-COMP:20238"/>
        <dbReference type="ChEBI" id="CHEBI:33019"/>
        <dbReference type="ChEBI" id="CHEBI:46398"/>
        <dbReference type="ChEBI" id="CHEBI:46858"/>
        <dbReference type="ChEBI" id="CHEBI:90602"/>
    </reaction>
</comment>
<comment type="cofactor">
    <cofactor evidence="1">
        <name>Mg(2+)</name>
        <dbReference type="ChEBI" id="CHEBI:18420"/>
    </cofactor>
    <cofactor evidence="1">
        <name>Mn(2+)</name>
        <dbReference type="ChEBI" id="CHEBI:29035"/>
    </cofactor>
</comment>
<comment type="similarity">
    <text evidence="1">Belongs to the SELO family.</text>
</comment>
<feature type="chain" id="PRO_1000062027" description="Protein nucleotidyltransferase YdiU">
    <location>
        <begin position="1"/>
        <end position="478"/>
    </location>
</feature>
<feature type="active site" description="Proton acceptor" evidence="1">
    <location>
        <position position="246"/>
    </location>
</feature>
<feature type="binding site" evidence="1">
    <location>
        <position position="84"/>
    </location>
    <ligand>
        <name>ATP</name>
        <dbReference type="ChEBI" id="CHEBI:30616"/>
    </ligand>
</feature>
<feature type="binding site" evidence="1">
    <location>
        <position position="86"/>
    </location>
    <ligand>
        <name>ATP</name>
        <dbReference type="ChEBI" id="CHEBI:30616"/>
    </ligand>
</feature>
<feature type="binding site" evidence="1">
    <location>
        <position position="87"/>
    </location>
    <ligand>
        <name>ATP</name>
        <dbReference type="ChEBI" id="CHEBI:30616"/>
    </ligand>
</feature>
<feature type="binding site" evidence="1">
    <location>
        <position position="107"/>
    </location>
    <ligand>
        <name>ATP</name>
        <dbReference type="ChEBI" id="CHEBI:30616"/>
    </ligand>
</feature>
<feature type="binding site" evidence="1">
    <location>
        <position position="119"/>
    </location>
    <ligand>
        <name>ATP</name>
        <dbReference type="ChEBI" id="CHEBI:30616"/>
    </ligand>
</feature>
<feature type="binding site" evidence="1">
    <location>
        <position position="120"/>
    </location>
    <ligand>
        <name>ATP</name>
        <dbReference type="ChEBI" id="CHEBI:30616"/>
    </ligand>
</feature>
<feature type="binding site" evidence="1">
    <location>
        <position position="170"/>
    </location>
    <ligand>
        <name>ATP</name>
        <dbReference type="ChEBI" id="CHEBI:30616"/>
    </ligand>
</feature>
<feature type="binding site" evidence="1">
    <location>
        <position position="177"/>
    </location>
    <ligand>
        <name>ATP</name>
        <dbReference type="ChEBI" id="CHEBI:30616"/>
    </ligand>
</feature>
<feature type="binding site" evidence="1">
    <location>
        <position position="247"/>
    </location>
    <ligand>
        <name>Mg(2+)</name>
        <dbReference type="ChEBI" id="CHEBI:18420"/>
    </ligand>
</feature>
<feature type="binding site" evidence="1">
    <location>
        <position position="256"/>
    </location>
    <ligand>
        <name>ATP</name>
        <dbReference type="ChEBI" id="CHEBI:30616"/>
    </ligand>
</feature>
<feature type="binding site" evidence="1">
    <location>
        <position position="256"/>
    </location>
    <ligand>
        <name>Mg(2+)</name>
        <dbReference type="ChEBI" id="CHEBI:18420"/>
    </ligand>
</feature>
<evidence type="ECO:0000255" key="1">
    <source>
        <dbReference type="HAMAP-Rule" id="MF_00692"/>
    </source>
</evidence>
<accession>A7ZMH3</accession>
<name>SELO_ECO24</name>
<sequence>MTLSFITRWRDELPATYTALSPTPLNNARLIWHNTELANTLSIPSSLFKNGAGVWGGETLLPGMSPLAQVYSGHQFGVWAGQLGDGRGILLGEQLLADGTTMDWHLKGAGLTPYSRMGDGRAVLRSTIRESLASEAMHYLGIPTTRALSIVTSDSPVYRETVEPGAMLMRVAPSHLRFGHFEHFYYRREPEKVRQLADFAIRHYWSYLEDDEDKYRLWFSDVVARTASLIAQWQTVGFAHGVMNTDNMSLLGLTLDYGPFGFLDDYEPGFICNHSDHQGRYSFDNQPAVALWNLHRLAQTLSPFVAVDALNEALDSYQQVLLTHYGQRMRQKLGFMTEQKEDNALLNELFSLMARERSDYTRTFRMLSLTEQHSAASPLRDEFIDRAAFDDWFARYRGRLQQDEVSDSERQQLMQSVNPALVLRNWLAQRAIEAAEKGDMTELHRLHEALRNPFSDRDDDYVSRPPDWGKRLEVSCSS</sequence>
<keyword id="KW-0067">ATP-binding</keyword>
<keyword id="KW-0460">Magnesium</keyword>
<keyword id="KW-0464">Manganese</keyword>
<keyword id="KW-0479">Metal-binding</keyword>
<keyword id="KW-0547">Nucleotide-binding</keyword>
<keyword id="KW-0548">Nucleotidyltransferase</keyword>
<keyword id="KW-1185">Reference proteome</keyword>
<keyword id="KW-0808">Transferase</keyword>
<organism>
    <name type="scientific">Escherichia coli O139:H28 (strain E24377A / ETEC)</name>
    <dbReference type="NCBI Taxonomy" id="331111"/>
    <lineage>
        <taxon>Bacteria</taxon>
        <taxon>Pseudomonadati</taxon>
        <taxon>Pseudomonadota</taxon>
        <taxon>Gammaproteobacteria</taxon>
        <taxon>Enterobacterales</taxon>
        <taxon>Enterobacteriaceae</taxon>
        <taxon>Escherichia</taxon>
    </lineage>
</organism>
<gene>
    <name evidence="1" type="primary">ydiU</name>
    <name evidence="1" type="synonym">selO</name>
    <name type="ordered locus">EcE24377A_1924</name>
</gene>
<proteinExistence type="inferred from homology"/>